<reference key="1">
    <citation type="journal article" date="1998" name="Nature">
        <title>Deciphering the biology of Mycobacterium tuberculosis from the complete genome sequence.</title>
        <authorList>
            <person name="Cole S.T."/>
            <person name="Brosch R."/>
            <person name="Parkhill J."/>
            <person name="Garnier T."/>
            <person name="Churcher C.M."/>
            <person name="Harris D.E."/>
            <person name="Gordon S.V."/>
            <person name="Eiglmeier K."/>
            <person name="Gas S."/>
            <person name="Barry C.E. III"/>
            <person name="Tekaia F."/>
            <person name="Badcock K."/>
            <person name="Basham D."/>
            <person name="Brown D."/>
            <person name="Chillingworth T."/>
            <person name="Connor R."/>
            <person name="Davies R.M."/>
            <person name="Devlin K."/>
            <person name="Feltwell T."/>
            <person name="Gentles S."/>
            <person name="Hamlin N."/>
            <person name="Holroyd S."/>
            <person name="Hornsby T."/>
            <person name="Jagels K."/>
            <person name="Krogh A."/>
            <person name="McLean J."/>
            <person name="Moule S."/>
            <person name="Murphy L.D."/>
            <person name="Oliver S."/>
            <person name="Osborne J."/>
            <person name="Quail M.A."/>
            <person name="Rajandream M.A."/>
            <person name="Rogers J."/>
            <person name="Rutter S."/>
            <person name="Seeger K."/>
            <person name="Skelton S."/>
            <person name="Squares S."/>
            <person name="Squares R."/>
            <person name="Sulston J.E."/>
            <person name="Taylor K."/>
            <person name="Whitehead S."/>
            <person name="Barrell B.G."/>
        </authorList>
    </citation>
    <scope>NUCLEOTIDE SEQUENCE [LARGE SCALE GENOMIC DNA]</scope>
    <source>
        <strain>ATCC 25618 / H37Rv</strain>
    </source>
</reference>
<reference key="2">
    <citation type="journal article" date="2004" name="Arch. Biochem. Biophys.">
        <title>Cloning and expression of the trehalose-phosphate phosphatase of Mycobacterium tuberculosis: comparison to the enzyme from Mycobacterium smegmatis.</title>
        <authorList>
            <person name="Edavana V.K."/>
            <person name="Pastuszak I."/>
            <person name="Carroll J.D."/>
            <person name="Thampi P."/>
            <person name="Abraham E.C."/>
            <person name="Elbein A.D."/>
        </authorList>
    </citation>
    <scope>FUNCTION</scope>
    <scope>ACTIVITY REGULATION</scope>
    <scope>COFACTOR</scope>
    <scope>BIOPHYSICOCHEMICAL PROPERTIES</scope>
</reference>
<reference key="3">
    <citation type="journal article" date="2005" name="J. Biol. Chem.">
        <title>The OtsAB pathway is essential for trehalose biosynthesis in Mycobacterium tuberculosis.</title>
        <authorList>
            <person name="Murphy H.N."/>
            <person name="Stewart G.R."/>
            <person name="Mischenko V.V."/>
            <person name="Apt A.S."/>
            <person name="Harris R."/>
            <person name="McAlister M.S.B."/>
            <person name="Driscoll P.C."/>
            <person name="Young D.B."/>
            <person name="Robertson B.D."/>
        </authorList>
    </citation>
    <scope>FUNCTION IN TREHALOSE BIOSYNTHESIS</scope>
    <scope>ACTIVITY REGULATION</scope>
    <scope>COFACTOR</scope>
    <scope>BIOPHYSICOCHEMICAL PROPERTIES</scope>
</reference>
<reference key="4">
    <citation type="journal article" date="2008" name="BMC Syst. Biol.">
        <title>targetTB: a target identification pipeline for Mycobacterium tuberculosis through an interactome, reactome and genome-scale structural analysis.</title>
        <authorList>
            <person name="Raman K."/>
            <person name="Yeturu K."/>
            <person name="Chandra N."/>
        </authorList>
    </citation>
    <scope>IDENTIFICATION AS A DRUG TARGET [LARGE SCALE ANALYSIS]</scope>
</reference>
<reference key="5">
    <citation type="journal article" date="2011" name="Mol. Cell. Proteomics">
        <title>Proteogenomic analysis of Mycobacterium tuberculosis by high resolution mass spectrometry.</title>
        <authorList>
            <person name="Kelkar D.S."/>
            <person name="Kumar D."/>
            <person name="Kumar P."/>
            <person name="Balakrishnan L."/>
            <person name="Muthusamy B."/>
            <person name="Yadav A.K."/>
            <person name="Shrivastava P."/>
            <person name="Marimuthu A."/>
            <person name="Anand S."/>
            <person name="Sundaram H."/>
            <person name="Kingsbury R."/>
            <person name="Harsha H.C."/>
            <person name="Nair B."/>
            <person name="Prasad T.S."/>
            <person name="Chauhan D.S."/>
            <person name="Katoch K."/>
            <person name="Katoch V.M."/>
            <person name="Kumar P."/>
            <person name="Chaerkady R."/>
            <person name="Ramachandran S."/>
            <person name="Dash D."/>
            <person name="Pandey A."/>
        </authorList>
    </citation>
    <scope>IDENTIFICATION BY MASS SPECTROMETRY [LARGE SCALE ANALYSIS]</scope>
    <source>
        <strain>ATCC 25618 / H37Rv</strain>
    </source>
</reference>
<evidence type="ECO:0000250" key="1"/>
<evidence type="ECO:0000269" key="2">
    <source>
    </source>
</evidence>
<evidence type="ECO:0000269" key="3">
    <source>
    </source>
</evidence>
<evidence type="ECO:0000305" key="4"/>
<evidence type="ECO:0007829" key="5">
    <source>
        <dbReference type="PDB" id="5GVX"/>
    </source>
</evidence>
<gene>
    <name type="primary">otsB</name>
    <name type="synonym">otsB2</name>
    <name type="ordered locus">Rv3372</name>
</gene>
<accession>P9WFZ5</accession>
<accession>L0TCC3</accession>
<accession>O50401</accession>
<accession>Q7D5L8</accession>
<comment type="function">
    <text evidence="2 3">Removes the phosphate from trehalose 6-phosphate to produce free trehalose.</text>
</comment>
<comment type="catalytic activity">
    <reaction>
        <text>alpha,alpha-trehalose 6-phosphate + H2O = alpha,alpha-trehalose + phosphate</text>
        <dbReference type="Rhea" id="RHEA:23420"/>
        <dbReference type="ChEBI" id="CHEBI:15377"/>
        <dbReference type="ChEBI" id="CHEBI:16551"/>
        <dbReference type="ChEBI" id="CHEBI:43474"/>
        <dbReference type="ChEBI" id="CHEBI:58429"/>
        <dbReference type="EC" id="3.1.3.12"/>
    </reaction>
</comment>
<comment type="cofactor">
    <cofactor evidence="2 3">
        <name>Mn(2+)</name>
        <dbReference type="ChEBI" id="CHEBI:29035"/>
    </cofactor>
    <cofactor evidence="2 3">
        <name>Mg(2+)</name>
        <dbReference type="ChEBI" id="CHEBI:18420"/>
    </cofactor>
</comment>
<comment type="activity regulation">
    <text evidence="2 3">Inhibited by EDTA and calcium. Diumycin and moenomycin stimulate activity at concentrations of up to 100 ug/ml, and then inhibit at higher concentrations.</text>
</comment>
<comment type="biophysicochemical properties">
    <kinetics>
        <KM evidence="2 3">1.2 mM for trehalose-6-phosphate (at 37 degrees Celsius and pH 7.5)</KM>
        <KM evidence="2 3">0.6 mM for trehalose-6-phosphate (at 37 degrees Celsius and pH 7.0)</KM>
    </kinetics>
    <phDependence>
        <text evidence="2 3">Optimum pH is 7.5.</text>
    </phDependence>
    <temperatureDependence>
        <text evidence="2 3">Thermostable at 50 degrees Celsius for at least 5 minutes.</text>
    </temperatureDependence>
</comment>
<comment type="pathway">
    <text>Glycan biosynthesis; trehalose biosynthesis.</text>
</comment>
<comment type="miscellaneous">
    <text>Was identified as a high-confidence drug target.</text>
</comment>
<comment type="similarity">
    <text evidence="4">Belongs to the trehalose phosphatase family.</text>
</comment>
<proteinExistence type="evidence at protein level"/>
<protein>
    <recommendedName>
        <fullName>Trehalose-phosphate phosphatase</fullName>
        <shortName>TPP</shortName>
        <ecNumber>3.1.3.12</ecNumber>
    </recommendedName>
    <alternativeName>
        <fullName>Trehalose-6-phosphate phosphatase</fullName>
    </alternativeName>
</protein>
<sequence>MRKLGPVTIDPRRHDAVLFDTTLDATQELVRQLQEVGVGTGVFGSGLDVPIVAAGRLAVRPGRCVVVSAHSAGVTAARESGFALIIGVDRTGCRDALRRDGADTVVTDLSEVSVRTGDRRMSQLPDALQALGLADGLVARQPAVFFDFDGTLSDIVEDPDAAWLAPGALEALQKLAARCPIAVLSGRDLADVTQRVGLPGIWYAGSHGFELTAPDGTHHQNDAAAAAIPVLKQAAAELRQQLGPFPGVVVEHKRFGVAVHYRNAARDRVGEVAAAVRTAEQRHALRVTTGREVIELRPDVDWDKGKTLLWVLDHLPHSGSAPLVPIYLGDDITDEDAFDVVGPHGVPIVVRHTDDGDRATAALFALDSPARVAEFTDRLARQLREAPLRAT</sequence>
<name>OTSB_MYCTU</name>
<keyword id="KW-0002">3D-structure</keyword>
<keyword id="KW-0378">Hydrolase</keyword>
<keyword id="KW-0460">Magnesium</keyword>
<keyword id="KW-0464">Manganese</keyword>
<keyword id="KW-0479">Metal-binding</keyword>
<keyword id="KW-1185">Reference proteome</keyword>
<feature type="chain" id="PRO_0000370706" description="Trehalose-phosphate phosphatase">
    <location>
        <begin position="1"/>
        <end position="391"/>
    </location>
</feature>
<feature type="active site" description="Nucleophile" evidence="1">
    <location>
        <position position="147"/>
    </location>
</feature>
<feature type="binding site" evidence="1">
    <location>
        <begin position="147"/>
        <end position="149"/>
    </location>
    <ligand>
        <name>substrate</name>
    </ligand>
</feature>
<feature type="binding site" evidence="1">
    <location>
        <position position="147"/>
    </location>
    <ligand>
        <name>Mg(2+)</name>
        <dbReference type="ChEBI" id="CHEBI:18420"/>
    </ligand>
</feature>
<feature type="binding site" evidence="1">
    <location>
        <position position="149"/>
    </location>
    <ligand>
        <name>Mg(2+)</name>
        <dbReference type="ChEBI" id="CHEBI:18420"/>
    </ligand>
</feature>
<feature type="binding site" evidence="1">
    <location>
        <position position="330"/>
    </location>
    <ligand>
        <name>Mg(2+)</name>
        <dbReference type="ChEBI" id="CHEBI:18420"/>
    </ligand>
</feature>
<feature type="strand" evidence="5">
    <location>
        <begin position="6"/>
        <end position="9"/>
    </location>
</feature>
<feature type="turn" evidence="5">
    <location>
        <begin position="11"/>
        <end position="13"/>
    </location>
</feature>
<feature type="strand" evidence="5">
    <location>
        <begin position="15"/>
        <end position="20"/>
    </location>
</feature>
<feature type="helix" evidence="5">
    <location>
        <begin position="27"/>
        <end position="35"/>
    </location>
</feature>
<feature type="strand" evidence="5">
    <location>
        <begin position="39"/>
        <end position="43"/>
    </location>
</feature>
<feature type="strand" evidence="5">
    <location>
        <begin position="45"/>
        <end position="47"/>
    </location>
</feature>
<feature type="helix" evidence="5">
    <location>
        <begin position="50"/>
        <end position="55"/>
    </location>
</feature>
<feature type="turn" evidence="5">
    <location>
        <begin position="56"/>
        <end position="58"/>
    </location>
</feature>
<feature type="helix" evidence="5">
    <location>
        <begin position="61"/>
        <end position="63"/>
    </location>
</feature>
<feature type="strand" evidence="5">
    <location>
        <begin position="64"/>
        <end position="70"/>
    </location>
</feature>
<feature type="helix" evidence="5">
    <location>
        <begin position="71"/>
        <end position="79"/>
    </location>
</feature>
<feature type="strand" evidence="5">
    <location>
        <begin position="83"/>
        <end position="88"/>
    </location>
</feature>
<feature type="strand" evidence="5">
    <location>
        <begin position="90"/>
        <end position="92"/>
    </location>
</feature>
<feature type="helix" evidence="5">
    <location>
        <begin position="94"/>
        <end position="100"/>
    </location>
</feature>
<feature type="strand" evidence="5">
    <location>
        <begin position="103"/>
        <end position="108"/>
    </location>
</feature>
<feature type="helix" evidence="5">
    <location>
        <begin position="109"/>
        <end position="111"/>
    </location>
</feature>
<feature type="strand" evidence="5">
    <location>
        <begin position="113"/>
        <end position="116"/>
    </location>
</feature>
<feature type="helix" evidence="5">
    <location>
        <begin position="121"/>
        <end position="123"/>
    </location>
</feature>
<feature type="helix" evidence="5">
    <location>
        <begin position="127"/>
        <end position="131"/>
    </location>
</feature>
<feature type="strand" evidence="5">
    <location>
        <begin position="142"/>
        <end position="147"/>
    </location>
</feature>
<feature type="turn" evidence="5">
    <location>
        <begin position="150"/>
        <end position="152"/>
    </location>
</feature>
<feature type="helix" evidence="5">
    <location>
        <begin position="159"/>
        <end position="161"/>
    </location>
</feature>
<feature type="helix" evidence="5">
    <location>
        <begin position="168"/>
        <end position="176"/>
    </location>
</feature>
<feature type="strand" evidence="5">
    <location>
        <begin position="181"/>
        <end position="184"/>
    </location>
</feature>
<feature type="helix" evidence="5">
    <location>
        <begin position="189"/>
        <end position="196"/>
    </location>
</feature>
<feature type="strand" evidence="5">
    <location>
        <begin position="200"/>
        <end position="205"/>
    </location>
</feature>
<feature type="helix" evidence="5">
    <location>
        <begin position="206"/>
        <end position="208"/>
    </location>
</feature>
<feature type="strand" evidence="5">
    <location>
        <begin position="210"/>
        <end position="212"/>
    </location>
</feature>
<feature type="strand" evidence="5">
    <location>
        <begin position="218"/>
        <end position="220"/>
    </location>
</feature>
<feature type="helix" evidence="5">
    <location>
        <begin position="222"/>
        <end position="225"/>
    </location>
</feature>
<feature type="helix" evidence="5">
    <location>
        <begin position="228"/>
        <end position="242"/>
    </location>
</feature>
<feature type="strand" evidence="5">
    <location>
        <begin position="249"/>
        <end position="253"/>
    </location>
</feature>
<feature type="strand" evidence="5">
    <location>
        <begin position="256"/>
        <end position="260"/>
    </location>
</feature>
<feature type="turn" evidence="5">
    <location>
        <begin position="266"/>
        <end position="268"/>
    </location>
</feature>
<feature type="helix" evidence="5">
    <location>
        <begin position="269"/>
        <end position="283"/>
    </location>
</feature>
<feature type="strand" evidence="5">
    <location>
        <begin position="286"/>
        <end position="289"/>
    </location>
</feature>
<feature type="strand" evidence="5">
    <location>
        <begin position="291"/>
        <end position="297"/>
    </location>
</feature>
<feature type="helix" evidence="5">
    <location>
        <begin position="304"/>
        <end position="313"/>
    </location>
</feature>
<feature type="strand" evidence="5">
    <location>
        <begin position="324"/>
        <end position="329"/>
    </location>
</feature>
<feature type="helix" evidence="5">
    <location>
        <begin position="335"/>
        <end position="338"/>
    </location>
</feature>
<feature type="strand" evidence="5">
    <location>
        <begin position="346"/>
        <end position="350"/>
    </location>
</feature>
<feature type="strand" evidence="5">
    <location>
        <begin position="359"/>
        <end position="361"/>
    </location>
</feature>
<feature type="strand" evidence="5">
    <location>
        <begin position="363"/>
        <end position="368"/>
    </location>
</feature>
<feature type="helix" evidence="5">
    <location>
        <begin position="369"/>
        <end position="385"/>
    </location>
</feature>
<organism>
    <name type="scientific">Mycobacterium tuberculosis (strain ATCC 25618 / H37Rv)</name>
    <dbReference type="NCBI Taxonomy" id="83332"/>
    <lineage>
        <taxon>Bacteria</taxon>
        <taxon>Bacillati</taxon>
        <taxon>Actinomycetota</taxon>
        <taxon>Actinomycetes</taxon>
        <taxon>Mycobacteriales</taxon>
        <taxon>Mycobacteriaceae</taxon>
        <taxon>Mycobacterium</taxon>
        <taxon>Mycobacterium tuberculosis complex</taxon>
    </lineage>
</organism>
<dbReference type="EC" id="3.1.3.12"/>
<dbReference type="EMBL" id="AL123456">
    <property type="protein sequence ID" value="CCP46193.1"/>
    <property type="molecule type" value="Genomic_DNA"/>
</dbReference>
<dbReference type="PIR" id="C70972">
    <property type="entry name" value="C70972"/>
</dbReference>
<dbReference type="RefSeq" id="NP_217889.1">
    <property type="nucleotide sequence ID" value="NC_000962.3"/>
</dbReference>
<dbReference type="RefSeq" id="WP_003417892.1">
    <property type="nucleotide sequence ID" value="NZ_NVQJ01000052.1"/>
</dbReference>
<dbReference type="PDB" id="5GVX">
    <property type="method" value="X-ray"/>
    <property type="resolution" value="2.60 A"/>
    <property type="chains" value="A=2-391"/>
</dbReference>
<dbReference type="PDBsum" id="5GVX"/>
<dbReference type="SMR" id="P9WFZ5"/>
<dbReference type="FunCoup" id="P9WFZ5">
    <property type="interactions" value="26"/>
</dbReference>
<dbReference type="STRING" id="83332.Rv3372"/>
<dbReference type="PaxDb" id="83332-Rv3372"/>
<dbReference type="DNASU" id="888137"/>
<dbReference type="GeneID" id="888137"/>
<dbReference type="KEGG" id="mtu:Rv3372"/>
<dbReference type="KEGG" id="mtv:RVBD_3372"/>
<dbReference type="TubercuList" id="Rv3372"/>
<dbReference type="eggNOG" id="COG0561">
    <property type="taxonomic scope" value="Bacteria"/>
</dbReference>
<dbReference type="eggNOG" id="COG0637">
    <property type="taxonomic scope" value="Bacteria"/>
</dbReference>
<dbReference type="InParanoid" id="P9WFZ5"/>
<dbReference type="OrthoDB" id="9816160at2"/>
<dbReference type="PhylomeDB" id="P9WFZ5"/>
<dbReference type="BRENDA" id="3.1.3.12">
    <property type="organism ID" value="3445"/>
</dbReference>
<dbReference type="Reactome" id="R-MTU-868688">
    <property type="pathway name" value="Trehalose biosynthesis"/>
</dbReference>
<dbReference type="UniPathway" id="UPA00299"/>
<dbReference type="Proteomes" id="UP000001584">
    <property type="component" value="Chromosome"/>
</dbReference>
<dbReference type="GO" id="GO:0005829">
    <property type="term" value="C:cytosol"/>
    <property type="evidence" value="ECO:0000304"/>
    <property type="project" value="Reactome"/>
</dbReference>
<dbReference type="GO" id="GO:0005886">
    <property type="term" value="C:plasma membrane"/>
    <property type="evidence" value="ECO:0007005"/>
    <property type="project" value="MTBBASE"/>
</dbReference>
<dbReference type="GO" id="GO:0000287">
    <property type="term" value="F:magnesium ion binding"/>
    <property type="evidence" value="ECO:0000314"/>
    <property type="project" value="MTBBASE"/>
</dbReference>
<dbReference type="GO" id="GO:0004805">
    <property type="term" value="F:trehalose-phosphatase activity"/>
    <property type="evidence" value="ECO:0000314"/>
    <property type="project" value="MTBBASE"/>
</dbReference>
<dbReference type="GO" id="GO:0016311">
    <property type="term" value="P:dephosphorylation"/>
    <property type="evidence" value="ECO:0000315"/>
    <property type="project" value="UniProtKB"/>
</dbReference>
<dbReference type="GO" id="GO:0005992">
    <property type="term" value="P:trehalose biosynthetic process"/>
    <property type="evidence" value="ECO:0000314"/>
    <property type="project" value="MTBBASE"/>
</dbReference>
<dbReference type="CDD" id="cd01627">
    <property type="entry name" value="HAD_TPP"/>
    <property type="match status" value="1"/>
</dbReference>
<dbReference type="FunFam" id="3.30.70.1020:FF:000007">
    <property type="entry name" value="Trehalose 6-phosphate phosphatase"/>
    <property type="match status" value="1"/>
</dbReference>
<dbReference type="Gene3D" id="3.40.50.1000">
    <property type="entry name" value="HAD superfamily/HAD-like"/>
    <property type="match status" value="2"/>
</dbReference>
<dbReference type="Gene3D" id="3.30.70.1020">
    <property type="entry name" value="Trehalose-6-phosphate phosphatase related protein, domain 2"/>
    <property type="match status" value="1"/>
</dbReference>
<dbReference type="InterPro" id="IPR036412">
    <property type="entry name" value="HAD-like_sf"/>
</dbReference>
<dbReference type="InterPro" id="IPR006379">
    <property type="entry name" value="HAD-SF_hydro_IIB"/>
</dbReference>
<dbReference type="InterPro" id="IPR023214">
    <property type="entry name" value="HAD_sf"/>
</dbReference>
<dbReference type="InterPro" id="IPR044651">
    <property type="entry name" value="OTSB-like"/>
</dbReference>
<dbReference type="InterPro" id="IPR003337">
    <property type="entry name" value="Trehalose_PPase"/>
</dbReference>
<dbReference type="NCBIfam" id="TIGR01484">
    <property type="entry name" value="HAD-SF-IIB"/>
    <property type="match status" value="1"/>
</dbReference>
<dbReference type="NCBIfam" id="TIGR00685">
    <property type="entry name" value="T6PP"/>
    <property type="match status" value="1"/>
</dbReference>
<dbReference type="PANTHER" id="PTHR43768">
    <property type="entry name" value="TREHALOSE 6-PHOSPHATE PHOSPHATASE"/>
    <property type="match status" value="1"/>
</dbReference>
<dbReference type="PANTHER" id="PTHR43768:SF3">
    <property type="entry name" value="TREHALOSE 6-PHOSPHATE PHOSPHATASE"/>
    <property type="match status" value="1"/>
</dbReference>
<dbReference type="Pfam" id="PF02358">
    <property type="entry name" value="Trehalose_PPase"/>
    <property type="match status" value="1"/>
</dbReference>
<dbReference type="SUPFAM" id="SSF56784">
    <property type="entry name" value="HAD-like"/>
    <property type="match status" value="2"/>
</dbReference>